<dbReference type="EMBL" id="CP000308">
    <property type="protein sequence ID" value="ABG12319.1"/>
    <property type="molecule type" value="Genomic_DNA"/>
</dbReference>
<dbReference type="RefSeq" id="WP_002209958.1">
    <property type="nucleotide sequence ID" value="NZ_CP009906.1"/>
</dbReference>
<dbReference type="SMR" id="Q1CB53"/>
<dbReference type="KEGG" id="ypa:YPA_0351"/>
<dbReference type="Proteomes" id="UP000001971">
    <property type="component" value="Chromosome"/>
</dbReference>
<dbReference type="GO" id="GO:0003677">
    <property type="term" value="F:DNA binding"/>
    <property type="evidence" value="ECO:0007669"/>
    <property type="project" value="UniProtKB-UniRule"/>
</dbReference>
<dbReference type="GO" id="GO:0003700">
    <property type="term" value="F:DNA-binding transcription factor activity"/>
    <property type="evidence" value="ECO:0007669"/>
    <property type="project" value="UniProtKB-UniRule"/>
</dbReference>
<dbReference type="CDD" id="cd08428">
    <property type="entry name" value="PBP2_IciA_ArgP"/>
    <property type="match status" value="1"/>
</dbReference>
<dbReference type="FunFam" id="1.10.10.10:FF:000061">
    <property type="entry name" value="HTH-type transcriptional regulator ArgP"/>
    <property type="match status" value="1"/>
</dbReference>
<dbReference type="FunFam" id="3.40.190.290:FF:000002">
    <property type="entry name" value="HTH-type transcriptional regulator ArgP"/>
    <property type="match status" value="1"/>
</dbReference>
<dbReference type="Gene3D" id="3.40.190.290">
    <property type="match status" value="1"/>
</dbReference>
<dbReference type="Gene3D" id="1.10.10.10">
    <property type="entry name" value="Winged helix-like DNA-binding domain superfamily/Winged helix DNA-binding domain"/>
    <property type="match status" value="1"/>
</dbReference>
<dbReference type="HAMAP" id="MF_00513">
    <property type="entry name" value="HTH_type_ArgP"/>
    <property type="match status" value="1"/>
</dbReference>
<dbReference type="InterPro" id="IPR017685">
    <property type="entry name" value="ArgP"/>
</dbReference>
<dbReference type="InterPro" id="IPR023490">
    <property type="entry name" value="ArgP_gammaproteobact"/>
</dbReference>
<dbReference type="InterPro" id="IPR050176">
    <property type="entry name" value="LTTR"/>
</dbReference>
<dbReference type="InterPro" id="IPR005119">
    <property type="entry name" value="LysR_subst-bd"/>
</dbReference>
<dbReference type="InterPro" id="IPR000847">
    <property type="entry name" value="Tscrpt_reg_HTH_LysR"/>
</dbReference>
<dbReference type="InterPro" id="IPR036388">
    <property type="entry name" value="WH-like_DNA-bd_sf"/>
</dbReference>
<dbReference type="InterPro" id="IPR036390">
    <property type="entry name" value="WH_DNA-bd_sf"/>
</dbReference>
<dbReference type="NCBIfam" id="TIGR03298">
    <property type="entry name" value="argP"/>
    <property type="match status" value="1"/>
</dbReference>
<dbReference type="NCBIfam" id="NF002964">
    <property type="entry name" value="PRK03635.1"/>
    <property type="match status" value="1"/>
</dbReference>
<dbReference type="NCBIfam" id="NF009888">
    <property type="entry name" value="PRK13348.1"/>
    <property type="match status" value="1"/>
</dbReference>
<dbReference type="PANTHER" id="PTHR30579:SF2">
    <property type="entry name" value="HTH-TYPE TRANSCRIPTIONAL REGULATOR ARGP"/>
    <property type="match status" value="1"/>
</dbReference>
<dbReference type="PANTHER" id="PTHR30579">
    <property type="entry name" value="TRANSCRIPTIONAL REGULATOR"/>
    <property type="match status" value="1"/>
</dbReference>
<dbReference type="Pfam" id="PF00126">
    <property type="entry name" value="HTH_1"/>
    <property type="match status" value="1"/>
</dbReference>
<dbReference type="Pfam" id="PF03466">
    <property type="entry name" value="LysR_substrate"/>
    <property type="match status" value="1"/>
</dbReference>
<dbReference type="PRINTS" id="PR00039">
    <property type="entry name" value="HTHLYSR"/>
</dbReference>
<dbReference type="SUPFAM" id="SSF53850">
    <property type="entry name" value="Periplasmic binding protein-like II"/>
    <property type="match status" value="1"/>
</dbReference>
<dbReference type="SUPFAM" id="SSF46785">
    <property type="entry name" value="Winged helix' DNA-binding domain"/>
    <property type="match status" value="1"/>
</dbReference>
<dbReference type="PROSITE" id="PS50931">
    <property type="entry name" value="HTH_LYSR"/>
    <property type="match status" value="1"/>
</dbReference>
<accession>Q1CB53</accession>
<feature type="chain" id="PRO_0000258618" description="HTH-type transcriptional regulator ArgP">
    <location>
        <begin position="1"/>
        <end position="302"/>
    </location>
</feature>
<feature type="domain" description="HTH lysR-type" evidence="1">
    <location>
        <begin position="4"/>
        <end position="60"/>
    </location>
</feature>
<feature type="DNA-binding region" description="H-T-H motif" evidence="1">
    <location>
        <begin position="21"/>
        <end position="40"/>
    </location>
</feature>
<proteinExistence type="inferred from homology"/>
<gene>
    <name evidence="1" type="primary">argP</name>
    <name type="synonym">iciA</name>
    <name type="ordered locus">YPA_0351</name>
</gene>
<comment type="function">
    <text evidence="1">Controls the transcription of genes involved in arginine and lysine metabolism.</text>
</comment>
<comment type="subunit">
    <text evidence="1">Homodimer.</text>
</comment>
<comment type="similarity">
    <text evidence="2">Belongs to the LysR transcriptional regulatory family.</text>
</comment>
<organism>
    <name type="scientific">Yersinia pestis bv. Antiqua (strain Antiqua)</name>
    <dbReference type="NCBI Taxonomy" id="360102"/>
    <lineage>
        <taxon>Bacteria</taxon>
        <taxon>Pseudomonadati</taxon>
        <taxon>Pseudomonadota</taxon>
        <taxon>Gammaproteobacteria</taxon>
        <taxon>Enterobacterales</taxon>
        <taxon>Yersiniaceae</taxon>
        <taxon>Yersinia</taxon>
    </lineage>
</organism>
<sequence length="302" mass="33892">MKRPDYRTLQALDAVIRERGFERAAQKLCITQSAVSQRIKQLENLFGQPLLVRTVPPRPTEQGQKLLALLHQVELLEEEWLGNDNGVDTPLLLSLAVNADSLATWLLPALKPVLADLPIRLNLQVEDETRTQERLRRGEVVGAVSIQPQPLPSCLVDQLGALDYLFVASKAFAERYFPNGVTRSALLKAPAVAFDHLDDMHQAFLQQNFDLSPGSVPCHIVNSSEAFVQLARQGTTCCMIPHLQIEKELASGELIDLTPGLLQRRMLFWHRFAPESRTMRKVTDALLSYGRQVLRQDSFIGQ</sequence>
<protein>
    <recommendedName>
        <fullName evidence="1">HTH-type transcriptional regulator ArgP</fullName>
    </recommendedName>
</protein>
<reference key="1">
    <citation type="journal article" date="2006" name="J. Bacteriol.">
        <title>Complete genome sequence of Yersinia pestis strains Antiqua and Nepal516: evidence of gene reduction in an emerging pathogen.</title>
        <authorList>
            <person name="Chain P.S.G."/>
            <person name="Hu P."/>
            <person name="Malfatti S.A."/>
            <person name="Radnedge L."/>
            <person name="Larimer F."/>
            <person name="Vergez L.M."/>
            <person name="Worsham P."/>
            <person name="Chu M.C."/>
            <person name="Andersen G.L."/>
        </authorList>
    </citation>
    <scope>NUCLEOTIDE SEQUENCE [LARGE SCALE GENOMIC DNA]</scope>
    <source>
        <strain>Antiqua</strain>
    </source>
</reference>
<evidence type="ECO:0000255" key="1">
    <source>
        <dbReference type="HAMAP-Rule" id="MF_00513"/>
    </source>
</evidence>
<evidence type="ECO:0000305" key="2"/>
<keyword id="KW-0238">DNA-binding</keyword>
<keyword id="KW-0804">Transcription</keyword>
<keyword id="KW-0805">Transcription regulation</keyword>
<name>ARGP_YERPA</name>